<comment type="function">
    <text evidence="1">Component of the SOS system and an inhibitor of cell division. Accumulation of SulA causes rapid cessation of cell division and the appearance of long, non-septate filaments. In the presence of GTP, binds a polymerization-competent form of FtsZ in a 1:1 ratio, thus inhibiting FtsZ polymerization and therefore preventing it from participating in the assembly of the Z ring. This mechanism prevents the premature segregation of damaged DNA to daughter cells during cell division.</text>
</comment>
<comment type="subunit">
    <text evidence="1">Interacts with FtsZ.</text>
</comment>
<comment type="induction">
    <text evidence="1">By DNA damage, as part of the SOS response.</text>
</comment>
<comment type="PTM">
    <text evidence="1">Is rapidly cleaved and degraded by the Lon protease once DNA damage is repaired.</text>
</comment>
<comment type="similarity">
    <text evidence="1">Belongs to the SulA family.</text>
</comment>
<comment type="sequence caution" evidence="2">
    <conflict type="erroneous initiation">
        <sequence resource="EMBL-CDS" id="CBA29741"/>
    </conflict>
    <text>Truncated N-terminus.</text>
</comment>
<gene>
    <name evidence="1" type="primary">sulA</name>
    <name type="ordered locus">Ctu_15660</name>
</gene>
<keyword id="KW-0131">Cell cycle</keyword>
<keyword id="KW-0132">Cell division</keyword>
<keyword id="KW-0227">DNA damage</keyword>
<keyword id="KW-0717">Septation</keyword>
<keyword id="KW-0742">SOS response</keyword>
<evidence type="ECO:0000255" key="1">
    <source>
        <dbReference type="HAMAP-Rule" id="MF_01179"/>
    </source>
</evidence>
<evidence type="ECO:0000305" key="2"/>
<proteinExistence type="inferred from homology"/>
<organism>
    <name type="scientific">Cronobacter turicensis (strain DSM 18703 / CCUG 55852 / LMG 23827 / z3032)</name>
    <dbReference type="NCBI Taxonomy" id="693216"/>
    <lineage>
        <taxon>Bacteria</taxon>
        <taxon>Pseudomonadati</taxon>
        <taxon>Pseudomonadota</taxon>
        <taxon>Gammaproteobacteria</taxon>
        <taxon>Enterobacterales</taxon>
        <taxon>Enterobacteriaceae</taxon>
        <taxon>Cronobacter</taxon>
    </lineage>
</organism>
<feature type="chain" id="PRO_0000414243" description="Cell division inhibitor SulA">
    <location>
        <begin position="1"/>
        <end position="168"/>
    </location>
</feature>
<feature type="region of interest" description="FtsZ binding" evidence="1">
    <location>
        <begin position="105"/>
        <end position="111"/>
    </location>
</feature>
<feature type="region of interest" description="Lon protease binding" evidence="1">
    <location>
        <begin position="161"/>
        <end position="168"/>
    </location>
</feature>
<feature type="site" description="Essential for degradation by Lon protease" evidence="1">
    <location>
        <position position="168"/>
    </location>
</feature>
<sequence>MYFSHQNRAHGSRRLAKETADALAQAETRGLISEVMYNEDQPRMTQMVLLPLLQQLGLQSRWQLWLTPQQRLSREWVESAGLPLTKVMQVSQMNPQVTLDSMIRALETGNYSVVIAWLHDDLTDDEHRRLTEAAEKGNAMGFLMRPVQPSLPGDRPRSGLRIHSRMVH</sequence>
<protein>
    <recommendedName>
        <fullName evidence="1">Cell division inhibitor SulA</fullName>
    </recommendedName>
</protein>
<reference key="1">
    <citation type="journal article" date="2011" name="J. Bacteriol.">
        <title>Complete genome sequence of Cronobacter turicensis LMG 23827, a food-borne pathogen causing deaths in neonates.</title>
        <authorList>
            <person name="Stephan R."/>
            <person name="Lehner A."/>
            <person name="Tischler P."/>
            <person name="Rattei T."/>
        </authorList>
    </citation>
    <scope>NUCLEOTIDE SEQUENCE [LARGE SCALE GENOMIC DNA]</scope>
    <source>
        <strain>DSM 18703 / CCUG 55852 / LMG 23827 / z3032</strain>
    </source>
</reference>
<accession>C9Y0Q0</accession>
<dbReference type="EMBL" id="FN543093">
    <property type="protein sequence ID" value="CBA29741.1"/>
    <property type="status" value="ALT_INIT"/>
    <property type="molecule type" value="Genomic_DNA"/>
</dbReference>
<dbReference type="SMR" id="C9Y0Q0"/>
<dbReference type="KEGG" id="ctu:CTU_15660"/>
<dbReference type="PATRIC" id="fig|693216.3.peg.1493"/>
<dbReference type="HOGENOM" id="CLU_118972_2_0_6"/>
<dbReference type="Proteomes" id="UP000002069">
    <property type="component" value="Chromosome"/>
</dbReference>
<dbReference type="GO" id="GO:0000917">
    <property type="term" value="P:division septum assembly"/>
    <property type="evidence" value="ECO:0007669"/>
    <property type="project" value="UniProtKB-KW"/>
</dbReference>
<dbReference type="GO" id="GO:0006281">
    <property type="term" value="P:DNA repair"/>
    <property type="evidence" value="ECO:0007669"/>
    <property type="project" value="TreeGrafter"/>
</dbReference>
<dbReference type="GO" id="GO:0051782">
    <property type="term" value="P:negative regulation of cell division"/>
    <property type="evidence" value="ECO:0007669"/>
    <property type="project" value="UniProtKB-UniRule"/>
</dbReference>
<dbReference type="GO" id="GO:0009432">
    <property type="term" value="P:SOS response"/>
    <property type="evidence" value="ECO:0007669"/>
    <property type="project" value="UniProtKB-UniRule"/>
</dbReference>
<dbReference type="FunFam" id="3.40.50.300:FF:000417">
    <property type="entry name" value="Cell division inhibitor SulA"/>
    <property type="match status" value="1"/>
</dbReference>
<dbReference type="Gene3D" id="3.40.50.300">
    <property type="entry name" value="P-loop containing nucleotide triphosphate hydrolases"/>
    <property type="match status" value="1"/>
</dbReference>
<dbReference type="HAMAP" id="MF_01179">
    <property type="entry name" value="SulA"/>
    <property type="match status" value="1"/>
</dbReference>
<dbReference type="InterPro" id="IPR004596">
    <property type="entry name" value="Cell_div_suppressor_SulA"/>
</dbReference>
<dbReference type="InterPro" id="IPR027417">
    <property type="entry name" value="P-loop_NTPase"/>
</dbReference>
<dbReference type="InterPro" id="IPR050356">
    <property type="entry name" value="SulA_CellDiv_inhibitor"/>
</dbReference>
<dbReference type="InterPro" id="IPR047696">
    <property type="entry name" value="SulA_enterobact"/>
</dbReference>
<dbReference type="NCBIfam" id="NF007892">
    <property type="entry name" value="PRK10595.1"/>
    <property type="match status" value="1"/>
</dbReference>
<dbReference type="NCBIfam" id="TIGR00623">
    <property type="entry name" value="SOS_SulA_coli"/>
    <property type="match status" value="1"/>
</dbReference>
<dbReference type="PANTHER" id="PTHR35369">
    <property type="entry name" value="BLR3025 PROTEIN-RELATED"/>
    <property type="match status" value="1"/>
</dbReference>
<dbReference type="PANTHER" id="PTHR35369:SF4">
    <property type="entry name" value="CELL DIVISION INHIBITOR SULA"/>
    <property type="match status" value="1"/>
</dbReference>
<dbReference type="Pfam" id="PF03846">
    <property type="entry name" value="SulA"/>
    <property type="match status" value="1"/>
</dbReference>
<dbReference type="PIRSF" id="PIRSF003093">
    <property type="entry name" value="SulA"/>
    <property type="match status" value="1"/>
</dbReference>
<dbReference type="SUPFAM" id="SSF52540">
    <property type="entry name" value="P-loop containing nucleoside triphosphate hydrolases"/>
    <property type="match status" value="1"/>
</dbReference>
<name>SULA_CROTZ</name>